<name>QUEA_SYNS9</name>
<organism>
    <name type="scientific">Synechococcus sp. (strain CC9902)</name>
    <dbReference type="NCBI Taxonomy" id="316279"/>
    <lineage>
        <taxon>Bacteria</taxon>
        <taxon>Bacillati</taxon>
        <taxon>Cyanobacteriota</taxon>
        <taxon>Cyanophyceae</taxon>
        <taxon>Synechococcales</taxon>
        <taxon>Synechococcaceae</taxon>
        <taxon>Synechococcus</taxon>
    </lineage>
</organism>
<feature type="chain" id="PRO_1000015301" description="S-adenosylmethionine:tRNA ribosyltransferase-isomerase">
    <location>
        <begin position="1"/>
        <end position="364"/>
    </location>
</feature>
<proteinExistence type="inferred from homology"/>
<protein>
    <recommendedName>
        <fullName evidence="1">S-adenosylmethionine:tRNA ribosyltransferase-isomerase</fullName>
        <ecNumber evidence="1">2.4.99.17</ecNumber>
    </recommendedName>
    <alternativeName>
        <fullName evidence="1">Queuosine biosynthesis protein QueA</fullName>
    </alternativeName>
</protein>
<dbReference type="EC" id="2.4.99.17" evidence="1"/>
<dbReference type="EMBL" id="CP000097">
    <property type="protein sequence ID" value="ABB25631.1"/>
    <property type="molecule type" value="Genomic_DNA"/>
</dbReference>
<dbReference type="RefSeq" id="WP_011359475.1">
    <property type="nucleotide sequence ID" value="NC_007513.1"/>
</dbReference>
<dbReference type="SMR" id="Q3AZ46"/>
<dbReference type="STRING" id="316279.Syncc9902_0663"/>
<dbReference type="KEGG" id="sye:Syncc9902_0663"/>
<dbReference type="eggNOG" id="COG0809">
    <property type="taxonomic scope" value="Bacteria"/>
</dbReference>
<dbReference type="HOGENOM" id="CLU_039110_1_0_3"/>
<dbReference type="OrthoDB" id="9805933at2"/>
<dbReference type="UniPathway" id="UPA00392"/>
<dbReference type="Proteomes" id="UP000002712">
    <property type="component" value="Chromosome"/>
</dbReference>
<dbReference type="GO" id="GO:0005737">
    <property type="term" value="C:cytoplasm"/>
    <property type="evidence" value="ECO:0007669"/>
    <property type="project" value="UniProtKB-SubCell"/>
</dbReference>
<dbReference type="GO" id="GO:0051075">
    <property type="term" value="F:S-adenosylmethionine:tRNA ribosyltransferase-isomerase activity"/>
    <property type="evidence" value="ECO:0007669"/>
    <property type="project" value="UniProtKB-EC"/>
</dbReference>
<dbReference type="GO" id="GO:0008616">
    <property type="term" value="P:queuosine biosynthetic process"/>
    <property type="evidence" value="ECO:0007669"/>
    <property type="project" value="UniProtKB-UniRule"/>
</dbReference>
<dbReference type="GO" id="GO:0002099">
    <property type="term" value="P:tRNA wobble guanine modification"/>
    <property type="evidence" value="ECO:0007669"/>
    <property type="project" value="TreeGrafter"/>
</dbReference>
<dbReference type="Gene3D" id="2.40.10.240">
    <property type="entry name" value="QueA-like"/>
    <property type="match status" value="1"/>
</dbReference>
<dbReference type="Gene3D" id="3.40.1780.10">
    <property type="entry name" value="QueA-like"/>
    <property type="match status" value="2"/>
</dbReference>
<dbReference type="HAMAP" id="MF_00113">
    <property type="entry name" value="QueA"/>
    <property type="match status" value="1"/>
</dbReference>
<dbReference type="InterPro" id="IPR003699">
    <property type="entry name" value="QueA"/>
</dbReference>
<dbReference type="InterPro" id="IPR042118">
    <property type="entry name" value="QueA_dom1"/>
</dbReference>
<dbReference type="InterPro" id="IPR042119">
    <property type="entry name" value="QueA_dom2"/>
</dbReference>
<dbReference type="InterPro" id="IPR036100">
    <property type="entry name" value="QueA_sf"/>
</dbReference>
<dbReference type="NCBIfam" id="NF001140">
    <property type="entry name" value="PRK00147.1"/>
    <property type="match status" value="1"/>
</dbReference>
<dbReference type="NCBIfam" id="TIGR00113">
    <property type="entry name" value="queA"/>
    <property type="match status" value="1"/>
</dbReference>
<dbReference type="PANTHER" id="PTHR30307">
    <property type="entry name" value="S-ADENOSYLMETHIONINE:TRNA RIBOSYLTRANSFERASE-ISOMERASE"/>
    <property type="match status" value="1"/>
</dbReference>
<dbReference type="PANTHER" id="PTHR30307:SF0">
    <property type="entry name" value="S-ADENOSYLMETHIONINE:TRNA RIBOSYLTRANSFERASE-ISOMERASE"/>
    <property type="match status" value="1"/>
</dbReference>
<dbReference type="Pfam" id="PF02547">
    <property type="entry name" value="Queuosine_synth"/>
    <property type="match status" value="1"/>
</dbReference>
<dbReference type="SUPFAM" id="SSF111337">
    <property type="entry name" value="QueA-like"/>
    <property type="match status" value="1"/>
</dbReference>
<reference key="1">
    <citation type="submission" date="2005-08" db="EMBL/GenBank/DDBJ databases">
        <title>Complete sequence of Synechococcus sp. CC9902.</title>
        <authorList>
            <person name="Copeland A."/>
            <person name="Lucas S."/>
            <person name="Lapidus A."/>
            <person name="Barry K."/>
            <person name="Detter J.C."/>
            <person name="Glavina T."/>
            <person name="Hammon N."/>
            <person name="Israni S."/>
            <person name="Pitluck S."/>
            <person name="Martinez M."/>
            <person name="Schmutz J."/>
            <person name="Larimer F."/>
            <person name="Land M."/>
            <person name="Kyrpides N."/>
            <person name="Ivanova N."/>
            <person name="Richardson P."/>
        </authorList>
    </citation>
    <scope>NUCLEOTIDE SEQUENCE [LARGE SCALE GENOMIC DNA]</scope>
    <source>
        <strain>CC9902</strain>
    </source>
</reference>
<evidence type="ECO:0000255" key="1">
    <source>
        <dbReference type="HAMAP-Rule" id="MF_00113"/>
    </source>
</evidence>
<accession>Q3AZ46</accession>
<gene>
    <name evidence="1" type="primary">queA</name>
    <name type="ordered locus">Syncc9902_0663</name>
</gene>
<sequence length="364" mass="39701">MPDSLDQQLSSYAYHLPPERIAQAPVEPRHDARLLIAPGQTDGVQAARHQKVWDLLEELRSGDLLVVNDTRVLKARIKVRRSGGGVSELLVLEPRGDGQWLCLARPAKRMRPGDLLTLDGTAITLRVLHEDPASGGRIVQFPLDCRDAESIEALLNQCGEVPLPPYIDRHDPGDAERYQTRYADRPGAVAAPTAGLHFSDELLAALQGKGVGLARITLHVGLGTFRPVETEDLTQLELHSEWIEVNASVVEAIQQCRGRVIAVGTTSVRALEGAAQLQGGVLKPFTGPVNLVIQPGYRFAVVQGLLTNFHLPKSSLLLLVSALIGREKLLALYAEAIDHEYRFFSYGDAMWISPDAVLPGVTPN</sequence>
<comment type="function">
    <text evidence="1">Transfers and isomerizes the ribose moiety from AdoMet to the 7-aminomethyl group of 7-deazaguanine (preQ1-tRNA) to give epoxyqueuosine (oQ-tRNA).</text>
</comment>
<comment type="catalytic activity">
    <reaction evidence="1">
        <text>7-aminomethyl-7-carbaguanosine(34) in tRNA + S-adenosyl-L-methionine = epoxyqueuosine(34) in tRNA + adenine + L-methionine + 2 H(+)</text>
        <dbReference type="Rhea" id="RHEA:32155"/>
        <dbReference type="Rhea" id="RHEA-COMP:10342"/>
        <dbReference type="Rhea" id="RHEA-COMP:18582"/>
        <dbReference type="ChEBI" id="CHEBI:15378"/>
        <dbReference type="ChEBI" id="CHEBI:16708"/>
        <dbReference type="ChEBI" id="CHEBI:57844"/>
        <dbReference type="ChEBI" id="CHEBI:59789"/>
        <dbReference type="ChEBI" id="CHEBI:82833"/>
        <dbReference type="ChEBI" id="CHEBI:194443"/>
        <dbReference type="EC" id="2.4.99.17"/>
    </reaction>
</comment>
<comment type="pathway">
    <text evidence="1">tRNA modification; tRNA-queuosine biosynthesis.</text>
</comment>
<comment type="subunit">
    <text evidence="1">Monomer.</text>
</comment>
<comment type="subcellular location">
    <subcellularLocation>
        <location evidence="1">Cytoplasm</location>
    </subcellularLocation>
</comment>
<comment type="similarity">
    <text evidence="1">Belongs to the QueA family.</text>
</comment>
<keyword id="KW-0963">Cytoplasm</keyword>
<keyword id="KW-0671">Queuosine biosynthesis</keyword>
<keyword id="KW-1185">Reference proteome</keyword>
<keyword id="KW-0949">S-adenosyl-L-methionine</keyword>
<keyword id="KW-0808">Transferase</keyword>